<reference key="1">
    <citation type="journal article" date="1998" name="Auk">
        <title>Phylogenetic relationships among trogons.</title>
        <authorList>
            <person name="Espinosa de los Monteros A."/>
        </authorList>
    </citation>
    <scope>NUCLEOTIDE SEQUENCE [GENOMIC DNA]</scope>
</reference>
<dbReference type="EMBL" id="U94801">
    <property type="protein sequence ID" value="AAC32988.1"/>
    <property type="molecule type" value="Genomic_DNA"/>
</dbReference>
<dbReference type="SMR" id="O79524"/>
<dbReference type="GO" id="GO:0005743">
    <property type="term" value="C:mitochondrial inner membrane"/>
    <property type="evidence" value="ECO:0007669"/>
    <property type="project" value="UniProtKB-SubCell"/>
</dbReference>
<dbReference type="GO" id="GO:0045275">
    <property type="term" value="C:respiratory chain complex III"/>
    <property type="evidence" value="ECO:0007669"/>
    <property type="project" value="InterPro"/>
</dbReference>
<dbReference type="GO" id="GO:0046872">
    <property type="term" value="F:metal ion binding"/>
    <property type="evidence" value="ECO:0007669"/>
    <property type="project" value="UniProtKB-KW"/>
</dbReference>
<dbReference type="GO" id="GO:0008121">
    <property type="term" value="F:ubiquinol-cytochrome-c reductase activity"/>
    <property type="evidence" value="ECO:0007669"/>
    <property type="project" value="InterPro"/>
</dbReference>
<dbReference type="GO" id="GO:0006122">
    <property type="term" value="P:mitochondrial electron transport, ubiquinol to cytochrome c"/>
    <property type="evidence" value="ECO:0007669"/>
    <property type="project" value="TreeGrafter"/>
</dbReference>
<dbReference type="CDD" id="cd00290">
    <property type="entry name" value="cytochrome_b_C"/>
    <property type="match status" value="1"/>
</dbReference>
<dbReference type="CDD" id="cd00284">
    <property type="entry name" value="Cytochrome_b_N"/>
    <property type="match status" value="1"/>
</dbReference>
<dbReference type="FunFam" id="1.20.810.10:FF:000002">
    <property type="entry name" value="Cytochrome b"/>
    <property type="match status" value="1"/>
</dbReference>
<dbReference type="Gene3D" id="1.20.810.10">
    <property type="entry name" value="Cytochrome Bc1 Complex, Chain C"/>
    <property type="match status" value="1"/>
</dbReference>
<dbReference type="InterPro" id="IPR005798">
    <property type="entry name" value="Cyt_b/b6_C"/>
</dbReference>
<dbReference type="InterPro" id="IPR036150">
    <property type="entry name" value="Cyt_b/b6_C_sf"/>
</dbReference>
<dbReference type="InterPro" id="IPR005797">
    <property type="entry name" value="Cyt_b/b6_N"/>
</dbReference>
<dbReference type="InterPro" id="IPR027387">
    <property type="entry name" value="Cytb/b6-like_sf"/>
</dbReference>
<dbReference type="InterPro" id="IPR030689">
    <property type="entry name" value="Cytochrome_b"/>
</dbReference>
<dbReference type="InterPro" id="IPR048260">
    <property type="entry name" value="Cytochrome_b_C_euk/bac"/>
</dbReference>
<dbReference type="InterPro" id="IPR048259">
    <property type="entry name" value="Cytochrome_b_N_euk/bac"/>
</dbReference>
<dbReference type="InterPro" id="IPR016174">
    <property type="entry name" value="Di-haem_cyt_TM"/>
</dbReference>
<dbReference type="PANTHER" id="PTHR19271">
    <property type="entry name" value="CYTOCHROME B"/>
    <property type="match status" value="1"/>
</dbReference>
<dbReference type="PANTHER" id="PTHR19271:SF16">
    <property type="entry name" value="CYTOCHROME B"/>
    <property type="match status" value="1"/>
</dbReference>
<dbReference type="Pfam" id="PF00032">
    <property type="entry name" value="Cytochrom_B_C"/>
    <property type="match status" value="1"/>
</dbReference>
<dbReference type="Pfam" id="PF00033">
    <property type="entry name" value="Cytochrome_B"/>
    <property type="match status" value="1"/>
</dbReference>
<dbReference type="PIRSF" id="PIRSF038885">
    <property type="entry name" value="COB"/>
    <property type="match status" value="1"/>
</dbReference>
<dbReference type="SUPFAM" id="SSF81648">
    <property type="entry name" value="a domain/subunit of cytochrome bc1 complex (Ubiquinol-cytochrome c reductase)"/>
    <property type="match status" value="1"/>
</dbReference>
<dbReference type="SUPFAM" id="SSF81342">
    <property type="entry name" value="Transmembrane di-heme cytochromes"/>
    <property type="match status" value="1"/>
</dbReference>
<dbReference type="PROSITE" id="PS51003">
    <property type="entry name" value="CYTB_CTER"/>
    <property type="match status" value="1"/>
</dbReference>
<dbReference type="PROSITE" id="PS51002">
    <property type="entry name" value="CYTB_NTER"/>
    <property type="match status" value="1"/>
</dbReference>
<feature type="chain" id="PRO_0000061688" description="Cytochrome b">
    <location>
        <begin position="1"/>
        <end position="380"/>
    </location>
</feature>
<feature type="transmembrane region" description="Helical" evidence="2">
    <location>
        <begin position="34"/>
        <end position="54"/>
    </location>
</feature>
<feature type="transmembrane region" description="Helical" evidence="2">
    <location>
        <begin position="78"/>
        <end position="99"/>
    </location>
</feature>
<feature type="transmembrane region" description="Helical" evidence="2">
    <location>
        <begin position="114"/>
        <end position="134"/>
    </location>
</feature>
<feature type="transmembrane region" description="Helical" evidence="2">
    <location>
        <begin position="179"/>
        <end position="199"/>
    </location>
</feature>
<feature type="transmembrane region" description="Helical" evidence="2">
    <location>
        <begin position="227"/>
        <end position="247"/>
    </location>
</feature>
<feature type="transmembrane region" description="Helical" evidence="2">
    <location>
        <begin position="289"/>
        <end position="309"/>
    </location>
</feature>
<feature type="transmembrane region" description="Helical" evidence="2">
    <location>
        <begin position="321"/>
        <end position="341"/>
    </location>
</feature>
<feature type="transmembrane region" description="Helical" evidence="2">
    <location>
        <begin position="348"/>
        <end position="368"/>
    </location>
</feature>
<feature type="binding site" description="axial binding residue" evidence="2">
    <location>
        <position position="84"/>
    </location>
    <ligand>
        <name>heme b</name>
        <dbReference type="ChEBI" id="CHEBI:60344"/>
        <label>b562</label>
    </ligand>
    <ligandPart>
        <name>Fe</name>
        <dbReference type="ChEBI" id="CHEBI:18248"/>
    </ligandPart>
</feature>
<feature type="binding site" description="axial binding residue" evidence="2">
    <location>
        <position position="98"/>
    </location>
    <ligand>
        <name>heme b</name>
        <dbReference type="ChEBI" id="CHEBI:60344"/>
        <label>b566</label>
    </ligand>
    <ligandPart>
        <name>Fe</name>
        <dbReference type="ChEBI" id="CHEBI:18248"/>
    </ligandPart>
</feature>
<feature type="binding site" description="axial binding residue" evidence="2">
    <location>
        <position position="183"/>
    </location>
    <ligand>
        <name>heme b</name>
        <dbReference type="ChEBI" id="CHEBI:60344"/>
        <label>b562</label>
    </ligand>
    <ligandPart>
        <name>Fe</name>
        <dbReference type="ChEBI" id="CHEBI:18248"/>
    </ligandPart>
</feature>
<feature type="binding site" description="axial binding residue" evidence="2">
    <location>
        <position position="197"/>
    </location>
    <ligand>
        <name>heme b</name>
        <dbReference type="ChEBI" id="CHEBI:60344"/>
        <label>b566</label>
    </ligand>
    <ligandPart>
        <name>Fe</name>
        <dbReference type="ChEBI" id="CHEBI:18248"/>
    </ligandPart>
</feature>
<feature type="binding site" evidence="2">
    <location>
        <position position="202"/>
    </location>
    <ligand>
        <name>a ubiquinone</name>
        <dbReference type="ChEBI" id="CHEBI:16389"/>
    </ligand>
</feature>
<proteinExistence type="inferred from homology"/>
<geneLocation type="mitochondrion"/>
<organism>
    <name type="scientific">Trogon curucui</name>
    <name type="common">Blue-crowned trogon</name>
    <dbReference type="NCBI Taxonomy" id="59414"/>
    <lineage>
        <taxon>Eukaryota</taxon>
        <taxon>Metazoa</taxon>
        <taxon>Chordata</taxon>
        <taxon>Craniata</taxon>
        <taxon>Vertebrata</taxon>
        <taxon>Euteleostomi</taxon>
        <taxon>Archelosauria</taxon>
        <taxon>Archosauria</taxon>
        <taxon>Dinosauria</taxon>
        <taxon>Saurischia</taxon>
        <taxon>Theropoda</taxon>
        <taxon>Coelurosauria</taxon>
        <taxon>Aves</taxon>
        <taxon>Neognathae</taxon>
        <taxon>Neoaves</taxon>
        <taxon>Telluraves</taxon>
        <taxon>Coraciimorphae</taxon>
        <taxon>Trogoniformes</taxon>
        <taxon>Trogonidae</taxon>
        <taxon>Trogon</taxon>
    </lineage>
</organism>
<keyword id="KW-0249">Electron transport</keyword>
<keyword id="KW-0349">Heme</keyword>
<keyword id="KW-0408">Iron</keyword>
<keyword id="KW-0472">Membrane</keyword>
<keyword id="KW-0479">Metal-binding</keyword>
<keyword id="KW-0496">Mitochondrion</keyword>
<keyword id="KW-0999">Mitochondrion inner membrane</keyword>
<keyword id="KW-0679">Respiratory chain</keyword>
<keyword id="KW-0812">Transmembrane</keyword>
<keyword id="KW-1133">Transmembrane helix</keyword>
<keyword id="KW-0813">Transport</keyword>
<keyword id="KW-0830">Ubiquinone</keyword>
<gene>
    <name type="primary">MT-CYB</name>
    <name type="synonym">COB</name>
    <name type="synonym">CYTB</name>
    <name type="synonym">MTCYB</name>
</gene>
<accession>O79524</accession>
<sequence length="380" mass="42707">MAPNIRKNHPLLKMINSSLIDLPTPSNISAWWNFGSLLGICLLTQILTGLLLAAHYTADTTLAFSSVAHTCRNVQYGWLLRNLHANGASFFFICIYLHIGRGFYYGSYLFQETWNTGVVLLLTLMATAFVGYVLPWGQMSFWGATVITNLFSAVPYIGQTLVEWAWGGFSVDNPTLTRFFALHFLLPFMIAGLTLIHLTFLHESGSNNPLGIMSNSDKIPFHPYFSLKDILGFMIMLLLLTTLALFHPNLLSDPKNFTPANPLVTPSHIKPEWYFLFAYAILRSIPNKLGGVLALAASVLILFLIPFLHKSKQRALTFRPLSQLLFWLLVSNLFILTWIGSQPVEHPFIIIGQLASTTYFTIILVLFPITSALENKMLNY</sequence>
<name>CYB_TROCU</name>
<evidence type="ECO:0000250" key="1"/>
<evidence type="ECO:0000250" key="2">
    <source>
        <dbReference type="UniProtKB" id="P00157"/>
    </source>
</evidence>
<evidence type="ECO:0000255" key="3">
    <source>
        <dbReference type="PROSITE-ProRule" id="PRU00967"/>
    </source>
</evidence>
<evidence type="ECO:0000255" key="4">
    <source>
        <dbReference type="PROSITE-ProRule" id="PRU00968"/>
    </source>
</evidence>
<protein>
    <recommendedName>
        <fullName>Cytochrome b</fullName>
    </recommendedName>
    <alternativeName>
        <fullName>Complex III subunit 3</fullName>
    </alternativeName>
    <alternativeName>
        <fullName>Complex III subunit III</fullName>
    </alternativeName>
    <alternativeName>
        <fullName>Cytochrome b-c1 complex subunit 3</fullName>
    </alternativeName>
    <alternativeName>
        <fullName>Ubiquinol-cytochrome-c reductase complex cytochrome b subunit</fullName>
    </alternativeName>
</protein>
<comment type="function">
    <text evidence="2">Component of the ubiquinol-cytochrome c reductase complex (complex III or cytochrome b-c1 complex) that is part of the mitochondrial respiratory chain. The b-c1 complex mediates electron transfer from ubiquinol to cytochrome c. Contributes to the generation of a proton gradient across the mitochondrial membrane that is then used for ATP synthesis.</text>
</comment>
<comment type="cofactor">
    <cofactor evidence="2">
        <name>heme b</name>
        <dbReference type="ChEBI" id="CHEBI:60344"/>
    </cofactor>
    <text evidence="2">Binds 2 heme b groups non-covalently.</text>
</comment>
<comment type="subunit">
    <text evidence="2">The cytochrome bc1 complex contains 11 subunits: 3 respiratory subunits (MT-CYB, CYC1 and UQCRFS1), 2 core proteins (UQCRC1 and UQCRC2) and 6 low-molecular weight proteins (UQCRH/QCR6, UQCRB/QCR7, UQCRQ/QCR8, UQCR10/QCR9, UQCR11/QCR10 and a cleavage product of UQCRFS1). This cytochrome bc1 complex then forms a dimer.</text>
</comment>
<comment type="subcellular location">
    <subcellularLocation>
        <location evidence="2">Mitochondrion inner membrane</location>
        <topology evidence="2">Multi-pass membrane protein</topology>
    </subcellularLocation>
</comment>
<comment type="miscellaneous">
    <text evidence="1">Heme 1 (or BL or b562) is low-potential and absorbs at about 562 nm, and heme 2 (or BH or b566) is high-potential and absorbs at about 566 nm.</text>
</comment>
<comment type="similarity">
    <text evidence="3 4">Belongs to the cytochrome b family.</text>
</comment>
<comment type="caution">
    <text evidence="2">The full-length protein contains only eight transmembrane helices, not nine as predicted by bioinformatics tools.</text>
</comment>